<protein>
    <recommendedName>
        <fullName evidence="1">Protein GET1</fullName>
    </recommendedName>
    <alternativeName>
        <fullName evidence="1">Guided entry of tail-anchored proteins 1</fullName>
    </alternativeName>
</protein>
<dbReference type="EMBL" id="KN294002">
    <property type="protein sequence ID" value="EEH33330.1"/>
    <property type="molecule type" value="Genomic_DNA"/>
</dbReference>
<dbReference type="RefSeq" id="XP_002793470.1">
    <property type="nucleotide sequence ID" value="XM_002793424.2"/>
</dbReference>
<dbReference type="SMR" id="C1H0T6"/>
<dbReference type="STRING" id="502779.C1H0T6"/>
<dbReference type="GeneID" id="9096729"/>
<dbReference type="KEGG" id="pbl:PAAG_04380"/>
<dbReference type="VEuPathDB" id="FungiDB:PAAG_04380"/>
<dbReference type="eggNOG" id="KOG4253">
    <property type="taxonomic scope" value="Eukaryota"/>
</dbReference>
<dbReference type="HOGENOM" id="CLU_089418_1_0_1"/>
<dbReference type="OMA" id="AEWIISF"/>
<dbReference type="OrthoDB" id="69461at2759"/>
<dbReference type="Proteomes" id="UP000002059">
    <property type="component" value="Partially assembled WGS sequence"/>
</dbReference>
<dbReference type="GO" id="GO:0005789">
    <property type="term" value="C:endoplasmic reticulum membrane"/>
    <property type="evidence" value="ECO:0007669"/>
    <property type="project" value="UniProtKB-SubCell"/>
</dbReference>
<dbReference type="GO" id="GO:0043529">
    <property type="term" value="C:GET complex"/>
    <property type="evidence" value="ECO:0007669"/>
    <property type="project" value="InterPro"/>
</dbReference>
<dbReference type="GO" id="GO:0043495">
    <property type="term" value="F:protein-membrane adaptor activity"/>
    <property type="evidence" value="ECO:0007669"/>
    <property type="project" value="TreeGrafter"/>
</dbReference>
<dbReference type="GO" id="GO:0071816">
    <property type="term" value="P:tail-anchored membrane protein insertion into ER membrane"/>
    <property type="evidence" value="ECO:0007669"/>
    <property type="project" value="InterPro"/>
</dbReference>
<dbReference type="FunFam" id="1.10.287.660:FF:000006">
    <property type="entry name" value="Protein GET1"/>
    <property type="match status" value="1"/>
</dbReference>
<dbReference type="Gene3D" id="1.10.287.660">
    <property type="entry name" value="Helix hairpin bin"/>
    <property type="match status" value="1"/>
</dbReference>
<dbReference type="HAMAP" id="MF_03113">
    <property type="entry name" value="Get1"/>
    <property type="match status" value="1"/>
</dbReference>
<dbReference type="InterPro" id="IPR028945">
    <property type="entry name" value="Get1"/>
</dbReference>
<dbReference type="InterPro" id="IPR027538">
    <property type="entry name" value="Get1_fungi"/>
</dbReference>
<dbReference type="InterPro" id="IPR029012">
    <property type="entry name" value="Helix_hairpin_bin_sf"/>
</dbReference>
<dbReference type="PANTHER" id="PTHR42650:SF1">
    <property type="entry name" value="GUIDED ENTRY OF TAIL-ANCHORED PROTEINS FACTOR 1"/>
    <property type="match status" value="1"/>
</dbReference>
<dbReference type="PANTHER" id="PTHR42650">
    <property type="entry name" value="TAIL-ANCHORED PROTEIN INSERTION RECEPTOR WRB"/>
    <property type="match status" value="1"/>
</dbReference>
<dbReference type="Pfam" id="PF04420">
    <property type="entry name" value="CHD5"/>
    <property type="match status" value="1"/>
</dbReference>
<name>GET1_PARBA</name>
<sequence length="207" mass="23395">MPSLLISVLFLHIAIYIINTIGASTIDSLLWLIYTKLPTSASCMAREQHQMKLEVVQLKREMNATSSQDEFAKWAKLRRRHDKALEEYEVKNKQFSRFKSLFDVAVKALRWAGTSGLILLLQFWFSKTPIFTLPPSWIPWQVEWVLSFPRAPMGTVSIQVWGGACAVMVALVGEAIGATVRYLYGSKDSMEAIKVGAGAVEKEKKRQ</sequence>
<gene>
    <name evidence="1" type="primary">GET1</name>
    <name type="ORF">PAAG_04380</name>
</gene>
<comment type="function">
    <text evidence="1">Required for the post-translational delivery of tail-anchored (TA) proteins to the endoplasmic reticulum. Acts as a membrane receptor for soluble GET3, which recognizes and selectively binds the transmembrane domain of TA proteins in the cytosol.</text>
</comment>
<comment type="subunit">
    <text evidence="1">Interacts with GET3.</text>
</comment>
<comment type="subcellular location">
    <subcellularLocation>
        <location evidence="1">Endoplasmic reticulum membrane</location>
        <topology evidence="1">Multi-pass membrane protein</topology>
    </subcellularLocation>
</comment>
<comment type="similarity">
    <text evidence="1">Belongs to the WRB/GET1 family.</text>
</comment>
<proteinExistence type="inferred from homology"/>
<keyword id="KW-0175">Coiled coil</keyword>
<keyword id="KW-0256">Endoplasmic reticulum</keyword>
<keyword id="KW-0472">Membrane</keyword>
<keyword id="KW-1185">Reference proteome</keyword>
<keyword id="KW-0812">Transmembrane</keyword>
<keyword id="KW-1133">Transmembrane helix</keyword>
<keyword id="KW-0813">Transport</keyword>
<organism>
    <name type="scientific">Paracoccidioides lutzii (strain ATCC MYA-826 / Pb01)</name>
    <name type="common">Paracoccidioides brasiliensis</name>
    <dbReference type="NCBI Taxonomy" id="502779"/>
    <lineage>
        <taxon>Eukaryota</taxon>
        <taxon>Fungi</taxon>
        <taxon>Dikarya</taxon>
        <taxon>Ascomycota</taxon>
        <taxon>Pezizomycotina</taxon>
        <taxon>Eurotiomycetes</taxon>
        <taxon>Eurotiomycetidae</taxon>
        <taxon>Onygenales</taxon>
        <taxon>Ajellomycetaceae</taxon>
        <taxon>Paracoccidioides</taxon>
    </lineage>
</organism>
<feature type="chain" id="PRO_0000388604" description="Protein GET1">
    <location>
        <begin position="1"/>
        <end position="207"/>
    </location>
</feature>
<feature type="topological domain" description="Lumenal" evidence="1">
    <location>
        <begin position="1"/>
        <end position="4"/>
    </location>
</feature>
<feature type="transmembrane region" description="Helical" evidence="1">
    <location>
        <begin position="5"/>
        <end position="24"/>
    </location>
</feature>
<feature type="topological domain" description="Cytoplasmic" evidence="1">
    <location>
        <begin position="25"/>
        <end position="110"/>
    </location>
</feature>
<feature type="transmembrane region" description="Helical" evidence="1">
    <location>
        <begin position="111"/>
        <end position="131"/>
    </location>
</feature>
<feature type="topological domain" description="Lumenal" evidence="1">
    <location>
        <begin position="132"/>
        <end position="155"/>
    </location>
</feature>
<feature type="transmembrane region" description="Helical" evidence="1">
    <location>
        <begin position="156"/>
        <end position="172"/>
    </location>
</feature>
<feature type="topological domain" description="Cytoplasmic" evidence="1">
    <location>
        <begin position="173"/>
        <end position="207"/>
    </location>
</feature>
<feature type="coiled-coil region" evidence="1">
    <location>
        <begin position="44"/>
        <end position="97"/>
    </location>
</feature>
<evidence type="ECO:0000255" key="1">
    <source>
        <dbReference type="HAMAP-Rule" id="MF_03113"/>
    </source>
</evidence>
<accession>C1H0T6</accession>
<reference key="1">
    <citation type="journal article" date="2011" name="PLoS Genet.">
        <title>Comparative genomic analysis of human fungal pathogens causing paracoccidioidomycosis.</title>
        <authorList>
            <person name="Desjardins C.A."/>
            <person name="Champion M.D."/>
            <person name="Holder J.W."/>
            <person name="Muszewska A."/>
            <person name="Goldberg J."/>
            <person name="Bailao A.M."/>
            <person name="Brigido M.M."/>
            <person name="Ferreira M.E."/>
            <person name="Garcia A.M."/>
            <person name="Grynberg M."/>
            <person name="Gujja S."/>
            <person name="Heiman D.I."/>
            <person name="Henn M.R."/>
            <person name="Kodira C.D."/>
            <person name="Leon-Narvaez H."/>
            <person name="Longo L.V.G."/>
            <person name="Ma L.-J."/>
            <person name="Malavazi I."/>
            <person name="Matsuo A.L."/>
            <person name="Morais F.V."/>
            <person name="Pereira M."/>
            <person name="Rodriguez-Brito S."/>
            <person name="Sakthikumar S."/>
            <person name="Salem-Izacc S.M."/>
            <person name="Sykes S.M."/>
            <person name="Teixeira M.M."/>
            <person name="Vallejo M.C."/>
            <person name="Walter M.E."/>
            <person name="Yandava C."/>
            <person name="Young S."/>
            <person name="Zeng Q."/>
            <person name="Zucker J."/>
            <person name="Felipe M.S."/>
            <person name="Goldman G.H."/>
            <person name="Haas B.J."/>
            <person name="McEwen J.G."/>
            <person name="Nino-Vega G."/>
            <person name="Puccia R."/>
            <person name="San-Blas G."/>
            <person name="Soares C.M."/>
            <person name="Birren B.W."/>
            <person name="Cuomo C.A."/>
        </authorList>
    </citation>
    <scope>NUCLEOTIDE SEQUENCE [LARGE SCALE GENOMIC DNA]</scope>
    <source>
        <strain>ATCC MYA-826 / Pb01</strain>
    </source>
</reference>